<reference key="1">
    <citation type="journal article" date="2005" name="Nat. Biotechnol.">
        <title>The complete genome sequence of the meat-borne lactic acid bacterium Lactobacillus sakei 23K.</title>
        <authorList>
            <person name="Chaillou S."/>
            <person name="Champomier-Verges M.-C."/>
            <person name="Cornet M."/>
            <person name="Crutz-Le Coq A.-M."/>
            <person name="Dudez A.-M."/>
            <person name="Martin V."/>
            <person name="Beaufils S."/>
            <person name="Darbon-Rongere E."/>
            <person name="Bossy R."/>
            <person name="Loux V."/>
            <person name="Zagorec M."/>
        </authorList>
    </citation>
    <scope>NUCLEOTIDE SEQUENCE [LARGE SCALE GENOMIC DNA]</scope>
    <source>
        <strain>23K</strain>
    </source>
</reference>
<dbReference type="EC" id="3.6.4.-" evidence="1"/>
<dbReference type="EMBL" id="CR936503">
    <property type="protein sequence ID" value="CAI54668.1"/>
    <property type="molecule type" value="Genomic_DNA"/>
</dbReference>
<dbReference type="RefSeq" id="WP_011374076.1">
    <property type="nucleotide sequence ID" value="NC_007576.1"/>
</dbReference>
<dbReference type="SMR" id="Q38YQ9"/>
<dbReference type="STRING" id="314315.LCA_0367"/>
<dbReference type="KEGG" id="lsa:LCA_0367"/>
<dbReference type="eggNOG" id="COG2255">
    <property type="taxonomic scope" value="Bacteria"/>
</dbReference>
<dbReference type="HOGENOM" id="CLU_055599_1_0_9"/>
<dbReference type="OrthoDB" id="9804478at2"/>
<dbReference type="Proteomes" id="UP000002707">
    <property type="component" value="Chromosome"/>
</dbReference>
<dbReference type="GO" id="GO:0005737">
    <property type="term" value="C:cytoplasm"/>
    <property type="evidence" value="ECO:0007669"/>
    <property type="project" value="UniProtKB-SubCell"/>
</dbReference>
<dbReference type="GO" id="GO:0048476">
    <property type="term" value="C:Holliday junction resolvase complex"/>
    <property type="evidence" value="ECO:0007669"/>
    <property type="project" value="UniProtKB-UniRule"/>
</dbReference>
<dbReference type="GO" id="GO:0005524">
    <property type="term" value="F:ATP binding"/>
    <property type="evidence" value="ECO:0007669"/>
    <property type="project" value="UniProtKB-UniRule"/>
</dbReference>
<dbReference type="GO" id="GO:0016887">
    <property type="term" value="F:ATP hydrolysis activity"/>
    <property type="evidence" value="ECO:0007669"/>
    <property type="project" value="InterPro"/>
</dbReference>
<dbReference type="GO" id="GO:0000400">
    <property type="term" value="F:four-way junction DNA binding"/>
    <property type="evidence" value="ECO:0007669"/>
    <property type="project" value="UniProtKB-UniRule"/>
</dbReference>
<dbReference type="GO" id="GO:0009378">
    <property type="term" value="F:four-way junction helicase activity"/>
    <property type="evidence" value="ECO:0007669"/>
    <property type="project" value="InterPro"/>
</dbReference>
<dbReference type="GO" id="GO:0006310">
    <property type="term" value="P:DNA recombination"/>
    <property type="evidence" value="ECO:0007669"/>
    <property type="project" value="UniProtKB-UniRule"/>
</dbReference>
<dbReference type="GO" id="GO:0006281">
    <property type="term" value="P:DNA repair"/>
    <property type="evidence" value="ECO:0007669"/>
    <property type="project" value="UniProtKB-UniRule"/>
</dbReference>
<dbReference type="CDD" id="cd00009">
    <property type="entry name" value="AAA"/>
    <property type="match status" value="1"/>
</dbReference>
<dbReference type="Gene3D" id="1.10.8.60">
    <property type="match status" value="1"/>
</dbReference>
<dbReference type="Gene3D" id="3.40.50.300">
    <property type="entry name" value="P-loop containing nucleotide triphosphate hydrolases"/>
    <property type="match status" value="1"/>
</dbReference>
<dbReference type="Gene3D" id="1.10.10.10">
    <property type="entry name" value="Winged helix-like DNA-binding domain superfamily/Winged helix DNA-binding domain"/>
    <property type="match status" value="1"/>
</dbReference>
<dbReference type="HAMAP" id="MF_00016">
    <property type="entry name" value="DNA_HJ_migration_RuvB"/>
    <property type="match status" value="1"/>
</dbReference>
<dbReference type="InterPro" id="IPR003593">
    <property type="entry name" value="AAA+_ATPase"/>
</dbReference>
<dbReference type="InterPro" id="IPR041445">
    <property type="entry name" value="AAA_lid_4"/>
</dbReference>
<dbReference type="InterPro" id="IPR004605">
    <property type="entry name" value="DNA_helicase_Holl-junc_RuvB"/>
</dbReference>
<dbReference type="InterPro" id="IPR027417">
    <property type="entry name" value="P-loop_NTPase"/>
</dbReference>
<dbReference type="InterPro" id="IPR008824">
    <property type="entry name" value="RuvB-like_N"/>
</dbReference>
<dbReference type="InterPro" id="IPR008823">
    <property type="entry name" value="RuvB_C"/>
</dbReference>
<dbReference type="InterPro" id="IPR036388">
    <property type="entry name" value="WH-like_DNA-bd_sf"/>
</dbReference>
<dbReference type="InterPro" id="IPR036390">
    <property type="entry name" value="WH_DNA-bd_sf"/>
</dbReference>
<dbReference type="NCBIfam" id="NF000868">
    <property type="entry name" value="PRK00080.1"/>
    <property type="match status" value="1"/>
</dbReference>
<dbReference type="NCBIfam" id="TIGR00635">
    <property type="entry name" value="ruvB"/>
    <property type="match status" value="1"/>
</dbReference>
<dbReference type="PANTHER" id="PTHR42848">
    <property type="match status" value="1"/>
</dbReference>
<dbReference type="PANTHER" id="PTHR42848:SF1">
    <property type="entry name" value="HOLLIDAY JUNCTION BRANCH MIGRATION COMPLEX SUBUNIT RUVB"/>
    <property type="match status" value="1"/>
</dbReference>
<dbReference type="Pfam" id="PF17864">
    <property type="entry name" value="AAA_lid_4"/>
    <property type="match status" value="1"/>
</dbReference>
<dbReference type="Pfam" id="PF05491">
    <property type="entry name" value="RuvB_C"/>
    <property type="match status" value="1"/>
</dbReference>
<dbReference type="Pfam" id="PF05496">
    <property type="entry name" value="RuvB_N"/>
    <property type="match status" value="1"/>
</dbReference>
<dbReference type="SMART" id="SM00382">
    <property type="entry name" value="AAA"/>
    <property type="match status" value="1"/>
</dbReference>
<dbReference type="SUPFAM" id="SSF52540">
    <property type="entry name" value="P-loop containing nucleoside triphosphate hydrolases"/>
    <property type="match status" value="1"/>
</dbReference>
<dbReference type="SUPFAM" id="SSF46785">
    <property type="entry name" value="Winged helix' DNA-binding domain"/>
    <property type="match status" value="1"/>
</dbReference>
<gene>
    <name evidence="1" type="primary">ruvB</name>
    <name type="ordered locus">LCA_0367</name>
</gene>
<feature type="chain" id="PRO_0000235376" description="Holliday junction branch migration complex subunit RuvB">
    <location>
        <begin position="1"/>
        <end position="335"/>
    </location>
</feature>
<feature type="region of interest" description="Large ATPase domain (RuvB-L)" evidence="1">
    <location>
        <begin position="2"/>
        <end position="184"/>
    </location>
</feature>
<feature type="region of interest" description="Small ATPAse domain (RuvB-S)" evidence="1">
    <location>
        <begin position="185"/>
        <end position="255"/>
    </location>
</feature>
<feature type="region of interest" description="Head domain (RuvB-H)" evidence="1">
    <location>
        <begin position="258"/>
        <end position="335"/>
    </location>
</feature>
<feature type="binding site" evidence="1">
    <location>
        <position position="23"/>
    </location>
    <ligand>
        <name>ATP</name>
        <dbReference type="ChEBI" id="CHEBI:30616"/>
    </ligand>
</feature>
<feature type="binding site" evidence="1">
    <location>
        <position position="24"/>
    </location>
    <ligand>
        <name>ATP</name>
        <dbReference type="ChEBI" id="CHEBI:30616"/>
    </ligand>
</feature>
<feature type="binding site" evidence="1">
    <location>
        <position position="65"/>
    </location>
    <ligand>
        <name>ATP</name>
        <dbReference type="ChEBI" id="CHEBI:30616"/>
    </ligand>
</feature>
<feature type="binding site" evidence="1">
    <location>
        <position position="68"/>
    </location>
    <ligand>
        <name>ATP</name>
        <dbReference type="ChEBI" id="CHEBI:30616"/>
    </ligand>
</feature>
<feature type="binding site" evidence="1">
    <location>
        <position position="69"/>
    </location>
    <ligand>
        <name>ATP</name>
        <dbReference type="ChEBI" id="CHEBI:30616"/>
    </ligand>
</feature>
<feature type="binding site" evidence="1">
    <location>
        <position position="69"/>
    </location>
    <ligand>
        <name>Mg(2+)</name>
        <dbReference type="ChEBI" id="CHEBI:18420"/>
    </ligand>
</feature>
<feature type="binding site" evidence="1">
    <location>
        <position position="70"/>
    </location>
    <ligand>
        <name>ATP</name>
        <dbReference type="ChEBI" id="CHEBI:30616"/>
    </ligand>
</feature>
<feature type="binding site" evidence="1">
    <location>
        <begin position="131"/>
        <end position="133"/>
    </location>
    <ligand>
        <name>ATP</name>
        <dbReference type="ChEBI" id="CHEBI:30616"/>
    </ligand>
</feature>
<feature type="binding site" evidence="1">
    <location>
        <position position="174"/>
    </location>
    <ligand>
        <name>ATP</name>
        <dbReference type="ChEBI" id="CHEBI:30616"/>
    </ligand>
</feature>
<feature type="binding site" evidence="1">
    <location>
        <position position="184"/>
    </location>
    <ligand>
        <name>ATP</name>
        <dbReference type="ChEBI" id="CHEBI:30616"/>
    </ligand>
</feature>
<feature type="binding site" evidence="1">
    <location>
        <position position="221"/>
    </location>
    <ligand>
        <name>ATP</name>
        <dbReference type="ChEBI" id="CHEBI:30616"/>
    </ligand>
</feature>
<feature type="binding site" evidence="1">
    <location>
        <position position="313"/>
    </location>
    <ligand>
        <name>DNA</name>
        <dbReference type="ChEBI" id="CHEBI:16991"/>
    </ligand>
</feature>
<feature type="binding site" evidence="1">
    <location>
        <position position="318"/>
    </location>
    <ligand>
        <name>DNA</name>
        <dbReference type="ChEBI" id="CHEBI:16991"/>
    </ligand>
</feature>
<name>RUVB_LATSS</name>
<accession>Q38YQ9</accession>
<organism>
    <name type="scientific">Latilactobacillus sakei subsp. sakei (strain 23K)</name>
    <name type="common">Lactobacillus sakei subsp. sakei</name>
    <dbReference type="NCBI Taxonomy" id="314315"/>
    <lineage>
        <taxon>Bacteria</taxon>
        <taxon>Bacillati</taxon>
        <taxon>Bacillota</taxon>
        <taxon>Bacilli</taxon>
        <taxon>Lactobacillales</taxon>
        <taxon>Lactobacillaceae</taxon>
        <taxon>Latilactobacillus</taxon>
    </lineage>
</organism>
<keyword id="KW-0067">ATP-binding</keyword>
<keyword id="KW-0963">Cytoplasm</keyword>
<keyword id="KW-0227">DNA damage</keyword>
<keyword id="KW-0233">DNA recombination</keyword>
<keyword id="KW-0234">DNA repair</keyword>
<keyword id="KW-0238">DNA-binding</keyword>
<keyword id="KW-0378">Hydrolase</keyword>
<keyword id="KW-0547">Nucleotide-binding</keyword>
<keyword id="KW-1185">Reference proteome</keyword>
<comment type="function">
    <text evidence="1">The RuvA-RuvB-RuvC complex processes Holliday junction (HJ) DNA during genetic recombination and DNA repair, while the RuvA-RuvB complex plays an important role in the rescue of blocked DNA replication forks via replication fork reversal (RFR). RuvA specifically binds to HJ cruciform DNA, conferring on it an open structure. The RuvB hexamer acts as an ATP-dependent pump, pulling dsDNA into and through the RuvAB complex. RuvB forms 2 homohexamers on either side of HJ DNA bound by 1 or 2 RuvA tetramers; 4 subunits per hexamer contact DNA at a time. Coordinated motions by a converter formed by DNA-disengaged RuvB subunits stimulates ATP hydrolysis and nucleotide exchange. Immobilization of the converter enables RuvB to convert the ATP-contained energy into a lever motion, pulling 2 nucleotides of DNA out of the RuvA tetramer per ATP hydrolyzed, thus driving DNA branch migration. The RuvB motors rotate together with the DNA substrate, which together with the progressing nucleotide cycle form the mechanistic basis for DNA recombination by continuous HJ branch migration. Branch migration allows RuvC to scan DNA until it finds its consensus sequence, where it cleaves and resolves cruciform DNA.</text>
</comment>
<comment type="catalytic activity">
    <reaction evidence="1">
        <text>ATP + H2O = ADP + phosphate + H(+)</text>
        <dbReference type="Rhea" id="RHEA:13065"/>
        <dbReference type="ChEBI" id="CHEBI:15377"/>
        <dbReference type="ChEBI" id="CHEBI:15378"/>
        <dbReference type="ChEBI" id="CHEBI:30616"/>
        <dbReference type="ChEBI" id="CHEBI:43474"/>
        <dbReference type="ChEBI" id="CHEBI:456216"/>
    </reaction>
</comment>
<comment type="subunit">
    <text evidence="1">Homohexamer. Forms an RuvA(8)-RuvB(12)-Holliday junction (HJ) complex. HJ DNA is sandwiched between 2 RuvA tetramers; dsDNA enters through RuvA and exits via RuvB. An RuvB hexamer assembles on each DNA strand where it exits the tetramer. Each RuvB hexamer is contacted by two RuvA subunits (via domain III) on 2 adjacent RuvB subunits; this complex drives branch migration. In the full resolvosome a probable DNA-RuvA(4)-RuvB(12)-RuvC(2) complex forms which resolves the HJ.</text>
</comment>
<comment type="subcellular location">
    <subcellularLocation>
        <location evidence="1">Cytoplasm</location>
    </subcellularLocation>
</comment>
<comment type="domain">
    <text evidence="1">Has 3 domains, the large (RuvB-L) and small ATPase (RuvB-S) domains and the C-terminal head (RuvB-H) domain. The head domain binds DNA, while the ATPase domains jointly bind ATP, ADP or are empty depending on the state of the subunit in the translocation cycle. During a single DNA translocation step the structure of each domain remains the same, but their relative positions change.</text>
</comment>
<comment type="similarity">
    <text evidence="1">Belongs to the RuvB family.</text>
</comment>
<proteinExistence type="inferred from homology"/>
<evidence type="ECO:0000255" key="1">
    <source>
        <dbReference type="HAMAP-Rule" id="MF_00016"/>
    </source>
</evidence>
<protein>
    <recommendedName>
        <fullName evidence="1">Holliday junction branch migration complex subunit RuvB</fullName>
        <ecNumber evidence="1">3.6.4.-</ecNumber>
    </recommendedName>
</protein>
<sequence length="335" mass="37266">MADERIVSAENDDFAEASIEKTLRPQVLAQYIGQDRVKNELAVYIEAAKKREESLDHVLLYGPPGLGKTTLAMVIANELQVQIRTTSGPAIERPGDLVALLNELQPGDVLFIDEIHRLPKMVEELLYSAMEDFYIDIVVGQGPTAHPVHFPLPPFTLIGATTRAGLLSAPLRDRFGIVEHMAYYTEADLMDIVQRSAGVFNMSIVPDGALEIARRSRGTPRIANRLLKRTRDYAQVADQNTIDQAIADHALSQLQVDIRGLDGVDRKILQMMIDYYQGGPVGLKTIAANIGEENETIEEVYEPYLLQIGFLKRTQRGRMVTPAGYAHLGMPYPEK</sequence>